<evidence type="ECO:0000250" key="1"/>
<evidence type="ECO:0000250" key="2">
    <source>
        <dbReference type="UniProtKB" id="P00918"/>
    </source>
</evidence>
<evidence type="ECO:0000250" key="3">
    <source>
        <dbReference type="UniProtKB" id="P22748"/>
    </source>
</evidence>
<evidence type="ECO:0000255" key="4"/>
<evidence type="ECO:0000255" key="5">
    <source>
        <dbReference type="PROSITE-ProRule" id="PRU01134"/>
    </source>
</evidence>
<evidence type="ECO:0000269" key="6">
    <source>
    </source>
</evidence>
<evidence type="ECO:0000269" key="7">
    <source>
    </source>
</evidence>
<evidence type="ECO:0000305" key="8"/>
<evidence type="ECO:0007829" key="9">
    <source>
        <dbReference type="PDB" id="2ZNC"/>
    </source>
</evidence>
<keyword id="KW-0002">3D-structure</keyword>
<keyword id="KW-1003">Cell membrane</keyword>
<keyword id="KW-1015">Disulfide bond</keyword>
<keyword id="KW-0325">Glycoprotein</keyword>
<keyword id="KW-0336">GPI-anchor</keyword>
<keyword id="KW-0449">Lipoprotein</keyword>
<keyword id="KW-0456">Lyase</keyword>
<keyword id="KW-0472">Membrane</keyword>
<keyword id="KW-0479">Metal-binding</keyword>
<keyword id="KW-1185">Reference proteome</keyword>
<keyword id="KW-0732">Signal</keyword>
<keyword id="KW-0862">Zinc</keyword>
<protein>
    <recommendedName>
        <fullName>Carbonic anhydrase 4</fullName>
        <ecNumber evidence="3">4.2.1.1</ecNumber>
    </recommendedName>
    <alternativeName>
        <fullName>Carbonate dehydratase IV</fullName>
    </alternativeName>
    <alternativeName>
        <fullName>Carbonic anhydrase IV</fullName>
        <shortName>CA-IV</shortName>
    </alternativeName>
</protein>
<name>CAH4_MOUSE</name>
<comment type="function">
    <text evidence="3">Catalyzes the reversible hydration of carbon dioxide into bicarbonate and protons and thus is essential to maintaining intracellular and extracellular pH. May stimulate the sodium/bicarbonate transporter activity of SLC4A4 that acts in pH homeostasis. It is essential for acid overload removal from the retina and retina epithelium, and acid release in the choriocapillaris in the choroid.</text>
</comment>
<comment type="catalytic activity">
    <reaction evidence="3">
        <text>hydrogencarbonate + H(+) = CO2 + H2O</text>
        <dbReference type="Rhea" id="RHEA:10748"/>
        <dbReference type="ChEBI" id="CHEBI:15377"/>
        <dbReference type="ChEBI" id="CHEBI:15378"/>
        <dbReference type="ChEBI" id="CHEBI:16526"/>
        <dbReference type="ChEBI" id="CHEBI:17544"/>
        <dbReference type="EC" id="4.2.1.1"/>
    </reaction>
    <physiologicalReaction direction="left-to-right" evidence="3">
        <dbReference type="Rhea" id="RHEA:10749"/>
    </physiologicalReaction>
    <physiologicalReaction direction="right-to-left" evidence="3">
        <dbReference type="Rhea" id="RHEA:10750"/>
    </physiologicalReaction>
</comment>
<comment type="cofactor">
    <cofactor evidence="7">
        <name>Zn(2+)</name>
        <dbReference type="ChEBI" id="CHEBI:29105"/>
    </cofactor>
</comment>
<comment type="activity regulation">
    <text evidence="1">Inhibited by acetazolamide.</text>
</comment>
<comment type="subunit">
    <text evidence="6">Interacts with SLC4A4.</text>
</comment>
<comment type="interaction">
    <interactant intactId="EBI-6859308">
        <id>Q64444</id>
    </interactant>
    <interactant intactId="EBI-771342">
        <id>O88343</id>
        <label>Slc4a4</label>
    </interactant>
    <organismsDiffer>false</organismsDiffer>
    <experiments>2</experiments>
</comment>
<comment type="subcellular location">
    <subcellularLocation>
        <location evidence="3">Cell membrane</location>
        <topology evidence="3">Lipid-anchor</topology>
        <topology evidence="3">GPI-anchor</topology>
    </subcellularLocation>
</comment>
<comment type="similarity">
    <text evidence="8">Belongs to the alpha-carbonic anhydrase family.</text>
</comment>
<gene>
    <name type="primary">Ca4</name>
    <name type="synonym">Car4</name>
</gene>
<proteinExistence type="evidence at protein level"/>
<accession>Q64444</accession>
<sequence length="305" mass="34351">MQLLLALLALAYVAPSTEDSGWCYEIQTKDPRSSCLGPEKWPGACKENQQSPINIVTARTKVNPRLTPFILVGYDQKQQWPIKNNQHTVEMTLGGGACIIGGDLPARYEAVQLHLHWSNGNDNGSEHSIDGRHFAMEMHIVHKKLTSSKEDSKDKFAVLAFMIEVGDKVNKGFQPLVEALPSISKPHSTSTVRESSLQDMLPPSTKMYTYFRYNGSLTTPNCDETVIWTVYKQPIKIHKNQFLEFSKNLYYDEDQKLNMKDNVRPLQPLGKRQVFKSHAPGQLLSLPLPTLLVPTLTCLVANFLQ</sequence>
<reference key="1">
    <citation type="journal article" date="1996" name="Biochem. Genet.">
        <title>Molecular cloning of the mouse gene coding for carbonic anhydrase IV.</title>
        <authorList>
            <person name="Tamai S."/>
            <person name="Cody L.B."/>
            <person name="Sly W.S."/>
        </authorList>
    </citation>
    <scope>NUCLEOTIDE SEQUENCE [GENOMIC DNA]</scope>
    <source>
        <strain>129/SvJ</strain>
        <tissue>Liver</tissue>
    </source>
</reference>
<reference key="2">
    <citation type="journal article" date="2004" name="Genome Res.">
        <title>The status, quality, and expansion of the NIH full-length cDNA project: the Mammalian Gene Collection (MGC).</title>
        <authorList>
            <consortium name="The MGC Project Team"/>
        </authorList>
    </citation>
    <scope>NUCLEOTIDE SEQUENCE [LARGE SCALE MRNA]</scope>
    <source>
        <tissue>Colon</tissue>
    </source>
</reference>
<reference key="3">
    <citation type="journal article" date="2003" name="Biochemistry">
        <title>Direct extracellular interaction between carbonic anhydrase IV and the human NBC1 sodium/bicarbonate co-transporter.</title>
        <authorList>
            <person name="Alvarez B.V."/>
            <person name="Loiselle F.B."/>
            <person name="Supuran C.T."/>
            <person name="Schwartz G.J."/>
            <person name="Casey J.R."/>
        </authorList>
    </citation>
    <scope>INTERACTION WITH SLC4A4</scope>
</reference>
<reference key="4">
    <citation type="journal article" date="2010" name="Cell">
        <title>A tissue-specific atlas of mouse protein phosphorylation and expression.</title>
        <authorList>
            <person name="Huttlin E.L."/>
            <person name="Jedrychowski M.P."/>
            <person name="Elias J.E."/>
            <person name="Goswami T."/>
            <person name="Rad R."/>
            <person name="Beausoleil S.A."/>
            <person name="Villen J."/>
            <person name="Haas W."/>
            <person name="Sowa M.E."/>
            <person name="Gygi S.P."/>
        </authorList>
    </citation>
    <scope>IDENTIFICATION BY MASS SPECTROMETRY [LARGE SCALE ANALYSIS]</scope>
    <source>
        <tissue>Brown adipose tissue</tissue>
        <tissue>Heart</tissue>
        <tissue>Kidney</tissue>
        <tissue>Lung</tissue>
    </source>
</reference>
<reference key="5">
    <citation type="journal article" date="1998" name="Protein Sci.">
        <title>Structures of murine carbonic anhydrase IV and human carbonic anhydrase II complexed with brinzolamide: molecular basis of isozyme-drug discrimination.</title>
        <authorList>
            <person name="Stams T."/>
            <person name="Chen Y."/>
            <person name="Boriack-Sjodin P.A."/>
            <person name="Hurt J.D."/>
            <person name="Liao J."/>
            <person name="May J.A."/>
            <person name="Dean T."/>
            <person name="Laipis P."/>
            <person name="Silverman D.N."/>
            <person name="Christianson D.W."/>
        </authorList>
    </citation>
    <scope>X-RAY CRYSTALLOGRAPHY (2.8 ANGSTROMS) IN COMPLEX WITH INHIBITOR AND ZINC ION</scope>
    <scope>COFACTOR</scope>
    <scope>DISULFIDE BONDS</scope>
</reference>
<feature type="signal peptide" evidence="4">
    <location>
        <begin position="1"/>
        <end position="17"/>
    </location>
</feature>
<feature type="chain" id="PRO_0000004228" description="Carbonic anhydrase 4">
    <location>
        <begin position="18"/>
        <end position="277"/>
    </location>
</feature>
<feature type="propeptide" id="PRO_0000004229" description="Removed in mature form" evidence="3">
    <location>
        <begin position="278"/>
        <end position="305"/>
    </location>
</feature>
<feature type="domain" description="Alpha-carbonic anhydrase" evidence="5">
    <location>
        <begin position="20"/>
        <end position="278"/>
    </location>
</feature>
<feature type="active site" description="Proton donor/acceptor" evidence="2">
    <location>
        <position position="87"/>
    </location>
</feature>
<feature type="binding site" evidence="7">
    <location>
        <position position="114"/>
    </location>
    <ligand>
        <name>Zn(2+)</name>
        <dbReference type="ChEBI" id="CHEBI:29105"/>
        <note>catalytic</note>
    </ligand>
</feature>
<feature type="binding site" evidence="7">
    <location>
        <position position="116"/>
    </location>
    <ligand>
        <name>Zn(2+)</name>
        <dbReference type="ChEBI" id="CHEBI:29105"/>
        <note>catalytic</note>
    </ligand>
</feature>
<feature type="binding site" evidence="7">
    <location>
        <position position="139"/>
    </location>
    <ligand>
        <name>Zn(2+)</name>
        <dbReference type="ChEBI" id="CHEBI:29105"/>
        <note>catalytic</note>
    </ligand>
</feature>
<feature type="binding site" evidence="2">
    <location>
        <begin position="218"/>
        <end position="219"/>
    </location>
    <ligand>
        <name>substrate</name>
    </ligand>
</feature>
<feature type="lipid moiety-binding region" description="GPI-anchor amidated serine" evidence="3">
    <location>
        <position position="277"/>
    </location>
</feature>
<feature type="glycosylation site" description="N-linked (GlcNAc...) asparagine" evidence="4">
    <location>
        <position position="123"/>
    </location>
</feature>
<feature type="glycosylation site" description="N-linked (GlcNAc...) asparagine" evidence="4">
    <location>
        <position position="214"/>
    </location>
</feature>
<feature type="disulfide bond" evidence="7">
    <location>
        <begin position="23"/>
        <end position="35"/>
    </location>
</feature>
<feature type="disulfide bond" evidence="7">
    <location>
        <begin position="45"/>
        <end position="222"/>
    </location>
</feature>
<feature type="helix" evidence="9">
    <location>
        <begin position="25"/>
        <end position="29"/>
    </location>
</feature>
<feature type="strand" evidence="9">
    <location>
        <begin position="30"/>
        <end position="33"/>
    </location>
</feature>
<feature type="helix" evidence="9">
    <location>
        <begin position="38"/>
        <end position="40"/>
    </location>
</feature>
<feature type="helix" evidence="9">
    <location>
        <begin position="43"/>
        <end position="46"/>
    </location>
</feature>
<feature type="strand" evidence="9">
    <location>
        <begin position="47"/>
        <end position="49"/>
    </location>
</feature>
<feature type="helix" evidence="9">
    <location>
        <begin position="57"/>
        <end position="59"/>
    </location>
</feature>
<feature type="strand" evidence="9">
    <location>
        <begin position="70"/>
        <end position="73"/>
    </location>
</feature>
<feature type="strand" evidence="9">
    <location>
        <begin position="78"/>
        <end position="84"/>
    </location>
</feature>
<feature type="strand" evidence="9">
    <location>
        <begin position="86"/>
        <end position="92"/>
    </location>
</feature>
<feature type="strand" evidence="9">
    <location>
        <begin position="96"/>
        <end position="100"/>
    </location>
</feature>
<feature type="strand" evidence="9">
    <location>
        <begin position="108"/>
        <end position="117"/>
    </location>
</feature>
<feature type="strand" evidence="9">
    <location>
        <begin position="119"/>
        <end position="123"/>
    </location>
</feature>
<feature type="strand" evidence="9">
    <location>
        <begin position="125"/>
        <end position="129"/>
    </location>
</feature>
<feature type="strand" evidence="9">
    <location>
        <begin position="135"/>
        <end position="144"/>
    </location>
</feature>
<feature type="strand" evidence="9">
    <location>
        <begin position="156"/>
        <end position="168"/>
    </location>
</feature>
<feature type="helix" evidence="9">
    <location>
        <begin position="171"/>
        <end position="173"/>
    </location>
</feature>
<feature type="helix" evidence="9">
    <location>
        <begin position="174"/>
        <end position="179"/>
    </location>
</feature>
<feature type="helix" evidence="9">
    <location>
        <begin position="180"/>
        <end position="182"/>
    </location>
</feature>
<feature type="strand" evidence="9">
    <location>
        <begin position="189"/>
        <end position="195"/>
    </location>
</feature>
<feature type="helix" evidence="9">
    <location>
        <begin position="198"/>
        <end position="200"/>
    </location>
</feature>
<feature type="helix" evidence="9">
    <location>
        <begin position="204"/>
        <end position="206"/>
    </location>
</feature>
<feature type="strand" evidence="9">
    <location>
        <begin position="210"/>
        <end position="215"/>
    </location>
</feature>
<feature type="strand" evidence="9">
    <location>
        <begin position="226"/>
        <end position="233"/>
    </location>
</feature>
<feature type="strand" evidence="9">
    <location>
        <begin position="235"/>
        <end position="238"/>
    </location>
</feature>
<feature type="helix" evidence="9">
    <location>
        <begin position="239"/>
        <end position="248"/>
    </location>
</feature>
<feature type="strand" evidence="9">
    <location>
        <begin position="250"/>
        <end position="252"/>
    </location>
</feature>
<feature type="strand" evidence="9">
    <location>
        <begin position="275"/>
        <end position="277"/>
    </location>
</feature>
<dbReference type="EC" id="4.2.1.1" evidence="3"/>
<dbReference type="EMBL" id="U37091">
    <property type="protein sequence ID" value="AAC52569.1"/>
    <property type="molecule type" value="Genomic_DNA"/>
</dbReference>
<dbReference type="EMBL" id="BC012704">
    <property type="protein sequence ID" value="AAH12704.1"/>
    <property type="molecule type" value="mRNA"/>
</dbReference>
<dbReference type="CCDS" id="CCDS25190.1"/>
<dbReference type="RefSeq" id="NP_031633.1">
    <property type="nucleotide sequence ID" value="NM_007607.2"/>
</dbReference>
<dbReference type="PDB" id="2ZNC">
    <property type="method" value="X-ray"/>
    <property type="resolution" value="2.80 A"/>
    <property type="chains" value="A=22-279"/>
</dbReference>
<dbReference type="PDB" id="3ZNC">
    <property type="method" value="X-ray"/>
    <property type="resolution" value="2.80 A"/>
    <property type="chains" value="A=22-279"/>
</dbReference>
<dbReference type="PDB" id="8JIF">
    <property type="method" value="EM"/>
    <property type="resolution" value="2.28 A"/>
    <property type="chains" value="R=22-277"/>
</dbReference>
<dbReference type="PDBsum" id="2ZNC"/>
<dbReference type="PDBsum" id="3ZNC"/>
<dbReference type="PDBsum" id="8JIF"/>
<dbReference type="EMDB" id="EMD-36311"/>
<dbReference type="SMR" id="Q64444"/>
<dbReference type="FunCoup" id="Q64444">
    <property type="interactions" value="111"/>
</dbReference>
<dbReference type="IntAct" id="Q64444">
    <property type="interactions" value="1"/>
</dbReference>
<dbReference type="STRING" id="10090.ENSMUSP00000099483"/>
<dbReference type="GlyConnect" id="2181">
    <property type="glycosylation" value="4 N-Linked glycans (2 sites)"/>
</dbReference>
<dbReference type="GlyCosmos" id="Q64444">
    <property type="glycosylation" value="2 sites, 4 glycans"/>
</dbReference>
<dbReference type="GlyGen" id="Q64444">
    <property type="glycosylation" value="2 sites, 5 N-linked glycans (2 sites)"/>
</dbReference>
<dbReference type="iPTMnet" id="Q64444"/>
<dbReference type="PhosphoSitePlus" id="Q64444"/>
<dbReference type="SwissPalm" id="Q64444"/>
<dbReference type="jPOST" id="Q64444"/>
<dbReference type="PaxDb" id="10090-ENSMUSP00000099483"/>
<dbReference type="PeptideAtlas" id="Q64444"/>
<dbReference type="ProteomicsDB" id="265422"/>
<dbReference type="Antibodypedia" id="2592">
    <property type="antibodies" value="303 antibodies from 34 providers"/>
</dbReference>
<dbReference type="DNASU" id="12351"/>
<dbReference type="Ensembl" id="ENSMUST00000103194.10">
    <property type="protein sequence ID" value="ENSMUSP00000099483.4"/>
    <property type="gene ID" value="ENSMUSG00000000805.19"/>
</dbReference>
<dbReference type="GeneID" id="12351"/>
<dbReference type="KEGG" id="mmu:12351"/>
<dbReference type="UCSC" id="uc007krg.2">
    <property type="organism name" value="mouse"/>
</dbReference>
<dbReference type="AGR" id="MGI:1096574"/>
<dbReference type="CTD" id="12351"/>
<dbReference type="MGI" id="MGI:1096574">
    <property type="gene designation" value="Car4"/>
</dbReference>
<dbReference type="VEuPathDB" id="HostDB:ENSMUSG00000000805"/>
<dbReference type="eggNOG" id="KOG0382">
    <property type="taxonomic scope" value="Eukaryota"/>
</dbReference>
<dbReference type="GeneTree" id="ENSGT00940000155690"/>
<dbReference type="HOGENOM" id="CLU_039326_2_0_1"/>
<dbReference type="InParanoid" id="Q64444"/>
<dbReference type="OMA" id="AVEFHLH"/>
<dbReference type="OrthoDB" id="429145at2759"/>
<dbReference type="PhylomeDB" id="Q64444"/>
<dbReference type="TreeFam" id="TF316425"/>
<dbReference type="Reactome" id="R-MMU-1237044">
    <property type="pathway name" value="Erythrocytes take up carbon dioxide and release oxygen"/>
</dbReference>
<dbReference type="Reactome" id="R-MMU-1247673">
    <property type="pathway name" value="Erythrocytes take up oxygen and release carbon dioxide"/>
</dbReference>
<dbReference type="Reactome" id="R-MMU-1475029">
    <property type="pathway name" value="Reversible hydration of carbon dioxide"/>
</dbReference>
<dbReference type="BioGRID-ORCS" id="12351">
    <property type="hits" value="2 hits in 79 CRISPR screens"/>
</dbReference>
<dbReference type="CD-CODE" id="CE726F99">
    <property type="entry name" value="Postsynaptic density"/>
</dbReference>
<dbReference type="ChiTaRS" id="Car4">
    <property type="organism name" value="mouse"/>
</dbReference>
<dbReference type="EvolutionaryTrace" id="Q64444"/>
<dbReference type="PRO" id="PR:Q64444"/>
<dbReference type="Proteomes" id="UP000000589">
    <property type="component" value="Chromosome 11"/>
</dbReference>
<dbReference type="RNAct" id="Q64444">
    <property type="molecule type" value="protein"/>
</dbReference>
<dbReference type="Bgee" id="ENSMUSG00000000805">
    <property type="expression patterns" value="Expressed in placenta labyrinth and 208 other cell types or tissues"/>
</dbReference>
<dbReference type="ExpressionAtlas" id="Q64444">
    <property type="expression patterns" value="baseline and differential"/>
</dbReference>
<dbReference type="GO" id="GO:0016324">
    <property type="term" value="C:apical plasma membrane"/>
    <property type="evidence" value="ECO:0007669"/>
    <property type="project" value="Ensembl"/>
</dbReference>
<dbReference type="GO" id="GO:0031526">
    <property type="term" value="C:brush border membrane"/>
    <property type="evidence" value="ECO:0007669"/>
    <property type="project" value="Ensembl"/>
</dbReference>
<dbReference type="GO" id="GO:0005793">
    <property type="term" value="C:endoplasmic reticulum-Golgi intermediate compartment"/>
    <property type="evidence" value="ECO:0007669"/>
    <property type="project" value="Ensembl"/>
</dbReference>
<dbReference type="GO" id="GO:0009897">
    <property type="term" value="C:external side of plasma membrane"/>
    <property type="evidence" value="ECO:0007669"/>
    <property type="project" value="Ensembl"/>
</dbReference>
<dbReference type="GO" id="GO:0070062">
    <property type="term" value="C:extracellular exosome"/>
    <property type="evidence" value="ECO:0007669"/>
    <property type="project" value="Ensembl"/>
</dbReference>
<dbReference type="GO" id="GO:0016020">
    <property type="term" value="C:membrane"/>
    <property type="evidence" value="ECO:0000314"/>
    <property type="project" value="MGI"/>
</dbReference>
<dbReference type="GO" id="GO:0048471">
    <property type="term" value="C:perinuclear region of cytoplasm"/>
    <property type="evidence" value="ECO:0007669"/>
    <property type="project" value="Ensembl"/>
</dbReference>
<dbReference type="GO" id="GO:0005886">
    <property type="term" value="C:plasma membrane"/>
    <property type="evidence" value="ECO:0000314"/>
    <property type="project" value="MGI"/>
</dbReference>
<dbReference type="GO" id="GO:0005791">
    <property type="term" value="C:rough endoplasmic reticulum"/>
    <property type="evidence" value="ECO:0007669"/>
    <property type="project" value="Ensembl"/>
</dbReference>
<dbReference type="GO" id="GO:0030667">
    <property type="term" value="C:secretory granule membrane"/>
    <property type="evidence" value="ECO:0007669"/>
    <property type="project" value="Ensembl"/>
</dbReference>
<dbReference type="GO" id="GO:0005802">
    <property type="term" value="C:trans-Golgi network"/>
    <property type="evidence" value="ECO:0007669"/>
    <property type="project" value="Ensembl"/>
</dbReference>
<dbReference type="GO" id="GO:0030658">
    <property type="term" value="C:transport vesicle membrane"/>
    <property type="evidence" value="ECO:0007669"/>
    <property type="project" value="Ensembl"/>
</dbReference>
<dbReference type="GO" id="GO:0004089">
    <property type="term" value="F:carbonate dehydratase activity"/>
    <property type="evidence" value="ECO:0000314"/>
    <property type="project" value="MGI"/>
</dbReference>
<dbReference type="GO" id="GO:0008270">
    <property type="term" value="F:zinc ion binding"/>
    <property type="evidence" value="ECO:0007669"/>
    <property type="project" value="InterPro"/>
</dbReference>
<dbReference type="GO" id="GO:0015701">
    <property type="term" value="P:bicarbonate transport"/>
    <property type="evidence" value="ECO:0007669"/>
    <property type="project" value="Ensembl"/>
</dbReference>
<dbReference type="GO" id="GO:0015670">
    <property type="term" value="P:carbon dioxide transport"/>
    <property type="evidence" value="ECO:0000305"/>
    <property type="project" value="MGI"/>
</dbReference>
<dbReference type="GO" id="GO:0006885">
    <property type="term" value="P:regulation of pH"/>
    <property type="evidence" value="ECO:0000305"/>
    <property type="project" value="MGI"/>
</dbReference>
<dbReference type="CDD" id="cd03117">
    <property type="entry name" value="alpha_CA_IV_XV_like"/>
    <property type="match status" value="1"/>
</dbReference>
<dbReference type="FunFam" id="3.10.200.10:FF:000003">
    <property type="entry name" value="Carbonic anhydrase 12"/>
    <property type="match status" value="1"/>
</dbReference>
<dbReference type="Gene3D" id="3.10.200.10">
    <property type="entry name" value="Alpha carbonic anhydrase"/>
    <property type="match status" value="1"/>
</dbReference>
<dbReference type="InterPro" id="IPR041874">
    <property type="entry name" value="CA4/CA15"/>
</dbReference>
<dbReference type="InterPro" id="IPR001148">
    <property type="entry name" value="CA_dom"/>
</dbReference>
<dbReference type="InterPro" id="IPR036398">
    <property type="entry name" value="CA_dom_sf"/>
</dbReference>
<dbReference type="InterPro" id="IPR023561">
    <property type="entry name" value="Carbonic_anhydrase_a-class"/>
</dbReference>
<dbReference type="InterPro" id="IPR018338">
    <property type="entry name" value="Carbonic_anhydrase_a-class_CS"/>
</dbReference>
<dbReference type="PANTHER" id="PTHR18952">
    <property type="entry name" value="CARBONIC ANHYDRASE"/>
    <property type="match status" value="1"/>
</dbReference>
<dbReference type="PANTHER" id="PTHR18952:SF95">
    <property type="entry name" value="CARBONIC ANHYDRASE 4"/>
    <property type="match status" value="1"/>
</dbReference>
<dbReference type="Pfam" id="PF00194">
    <property type="entry name" value="Carb_anhydrase"/>
    <property type="match status" value="1"/>
</dbReference>
<dbReference type="SMART" id="SM01057">
    <property type="entry name" value="Carb_anhydrase"/>
    <property type="match status" value="1"/>
</dbReference>
<dbReference type="SUPFAM" id="SSF51069">
    <property type="entry name" value="Carbonic anhydrase"/>
    <property type="match status" value="1"/>
</dbReference>
<dbReference type="PROSITE" id="PS00162">
    <property type="entry name" value="ALPHA_CA_1"/>
    <property type="match status" value="1"/>
</dbReference>
<dbReference type="PROSITE" id="PS51144">
    <property type="entry name" value="ALPHA_CA_2"/>
    <property type="match status" value="1"/>
</dbReference>
<organism>
    <name type="scientific">Mus musculus</name>
    <name type="common">Mouse</name>
    <dbReference type="NCBI Taxonomy" id="10090"/>
    <lineage>
        <taxon>Eukaryota</taxon>
        <taxon>Metazoa</taxon>
        <taxon>Chordata</taxon>
        <taxon>Craniata</taxon>
        <taxon>Vertebrata</taxon>
        <taxon>Euteleostomi</taxon>
        <taxon>Mammalia</taxon>
        <taxon>Eutheria</taxon>
        <taxon>Euarchontoglires</taxon>
        <taxon>Glires</taxon>
        <taxon>Rodentia</taxon>
        <taxon>Myomorpha</taxon>
        <taxon>Muroidea</taxon>
        <taxon>Muridae</taxon>
        <taxon>Murinae</taxon>
        <taxon>Mus</taxon>
        <taxon>Mus</taxon>
    </lineage>
</organism>